<dbReference type="EC" id="3.6.1.-" evidence="1"/>
<dbReference type="EMBL" id="CP000381">
    <property type="protein sequence ID" value="ABX74014.1"/>
    <property type="molecule type" value="Genomic_DNA"/>
</dbReference>
<dbReference type="RefSeq" id="WP_012222072.1">
    <property type="nucleotide sequence ID" value="NC_010120.1"/>
</dbReference>
<dbReference type="SMR" id="A9M3C0"/>
<dbReference type="KEGG" id="nmn:NMCC_1883"/>
<dbReference type="HOGENOM" id="CLU_033617_2_0_4"/>
<dbReference type="Proteomes" id="UP000001177">
    <property type="component" value="Chromosome"/>
</dbReference>
<dbReference type="GO" id="GO:0005737">
    <property type="term" value="C:cytoplasm"/>
    <property type="evidence" value="ECO:0007669"/>
    <property type="project" value="UniProtKB-SubCell"/>
</dbReference>
<dbReference type="GO" id="GO:0005525">
    <property type="term" value="F:GTP binding"/>
    <property type="evidence" value="ECO:0007669"/>
    <property type="project" value="UniProtKB-UniRule"/>
</dbReference>
<dbReference type="GO" id="GO:0003924">
    <property type="term" value="F:GTPase activity"/>
    <property type="evidence" value="ECO:0007669"/>
    <property type="project" value="UniProtKB-UniRule"/>
</dbReference>
<dbReference type="GO" id="GO:0046872">
    <property type="term" value="F:metal ion binding"/>
    <property type="evidence" value="ECO:0007669"/>
    <property type="project" value="UniProtKB-KW"/>
</dbReference>
<dbReference type="GO" id="GO:0019843">
    <property type="term" value="F:rRNA binding"/>
    <property type="evidence" value="ECO:0007669"/>
    <property type="project" value="UniProtKB-KW"/>
</dbReference>
<dbReference type="GO" id="GO:0042274">
    <property type="term" value="P:ribosomal small subunit biogenesis"/>
    <property type="evidence" value="ECO:0007669"/>
    <property type="project" value="UniProtKB-UniRule"/>
</dbReference>
<dbReference type="CDD" id="cd01854">
    <property type="entry name" value="YjeQ_EngC"/>
    <property type="match status" value="1"/>
</dbReference>
<dbReference type="Gene3D" id="3.40.50.300">
    <property type="entry name" value="P-loop containing nucleotide triphosphate hydrolases"/>
    <property type="match status" value="1"/>
</dbReference>
<dbReference type="Gene3D" id="1.10.40.50">
    <property type="entry name" value="Probable gtpase engc, domain 3"/>
    <property type="match status" value="1"/>
</dbReference>
<dbReference type="HAMAP" id="MF_01820">
    <property type="entry name" value="GTPase_RsgA"/>
    <property type="match status" value="1"/>
</dbReference>
<dbReference type="InterPro" id="IPR030378">
    <property type="entry name" value="G_CP_dom"/>
</dbReference>
<dbReference type="InterPro" id="IPR027417">
    <property type="entry name" value="P-loop_NTPase"/>
</dbReference>
<dbReference type="InterPro" id="IPR004881">
    <property type="entry name" value="Ribosome_biogen_GTPase_RsgA"/>
</dbReference>
<dbReference type="InterPro" id="IPR010914">
    <property type="entry name" value="RsgA_GTPase_dom"/>
</dbReference>
<dbReference type="NCBIfam" id="TIGR00157">
    <property type="entry name" value="ribosome small subunit-dependent GTPase A"/>
    <property type="match status" value="1"/>
</dbReference>
<dbReference type="PANTHER" id="PTHR32120">
    <property type="entry name" value="SMALL RIBOSOMAL SUBUNIT BIOGENESIS GTPASE RSGA"/>
    <property type="match status" value="1"/>
</dbReference>
<dbReference type="PANTHER" id="PTHR32120:SF11">
    <property type="entry name" value="SMALL RIBOSOMAL SUBUNIT BIOGENESIS GTPASE RSGA 1, MITOCHONDRIAL-RELATED"/>
    <property type="match status" value="1"/>
</dbReference>
<dbReference type="Pfam" id="PF03193">
    <property type="entry name" value="RsgA_GTPase"/>
    <property type="match status" value="1"/>
</dbReference>
<dbReference type="SUPFAM" id="SSF52540">
    <property type="entry name" value="P-loop containing nucleoside triphosphate hydrolases"/>
    <property type="match status" value="1"/>
</dbReference>
<dbReference type="PROSITE" id="PS50936">
    <property type="entry name" value="ENGC_GTPASE"/>
    <property type="match status" value="1"/>
</dbReference>
<dbReference type="PROSITE" id="PS51721">
    <property type="entry name" value="G_CP"/>
    <property type="match status" value="1"/>
</dbReference>
<accession>A9M3C0</accession>
<evidence type="ECO:0000255" key="1">
    <source>
        <dbReference type="HAMAP-Rule" id="MF_01820"/>
    </source>
</evidence>
<evidence type="ECO:0000255" key="2">
    <source>
        <dbReference type="PROSITE-ProRule" id="PRU01058"/>
    </source>
</evidence>
<feature type="chain" id="PRO_1000188108" description="Small ribosomal subunit biogenesis GTPase RsgA">
    <location>
        <begin position="1"/>
        <end position="307"/>
    </location>
</feature>
<feature type="domain" description="CP-type G" evidence="2">
    <location>
        <begin position="85"/>
        <end position="242"/>
    </location>
</feature>
<feature type="binding site" evidence="1">
    <location>
        <begin position="135"/>
        <end position="138"/>
    </location>
    <ligand>
        <name>GTP</name>
        <dbReference type="ChEBI" id="CHEBI:37565"/>
    </ligand>
</feature>
<feature type="binding site" evidence="1">
    <location>
        <begin position="184"/>
        <end position="192"/>
    </location>
    <ligand>
        <name>GTP</name>
        <dbReference type="ChEBI" id="CHEBI:37565"/>
    </ligand>
</feature>
<feature type="binding site" evidence="1">
    <location>
        <position position="266"/>
    </location>
    <ligand>
        <name>Zn(2+)</name>
        <dbReference type="ChEBI" id="CHEBI:29105"/>
    </ligand>
</feature>
<feature type="binding site" evidence="1">
    <location>
        <position position="271"/>
    </location>
    <ligand>
        <name>Zn(2+)</name>
        <dbReference type="ChEBI" id="CHEBI:29105"/>
    </ligand>
</feature>
<feature type="binding site" evidence="1">
    <location>
        <position position="273"/>
    </location>
    <ligand>
        <name>Zn(2+)</name>
        <dbReference type="ChEBI" id="CHEBI:29105"/>
    </ligand>
</feature>
<feature type="binding site" evidence="1">
    <location>
        <position position="279"/>
    </location>
    <ligand>
        <name>Zn(2+)</name>
        <dbReference type="ChEBI" id="CHEBI:29105"/>
    </ligand>
</feature>
<name>RSGA_NEIM0</name>
<reference key="1">
    <citation type="journal article" date="2008" name="Genomics">
        <title>Characterization of ST-4821 complex, a unique Neisseria meningitidis clone.</title>
        <authorList>
            <person name="Peng J."/>
            <person name="Yang L."/>
            <person name="Yang F."/>
            <person name="Yang J."/>
            <person name="Yan Y."/>
            <person name="Nie H."/>
            <person name="Zhang X."/>
            <person name="Xiong Z."/>
            <person name="Jiang Y."/>
            <person name="Cheng F."/>
            <person name="Xu X."/>
            <person name="Chen S."/>
            <person name="Sun L."/>
            <person name="Li W."/>
            <person name="Shen Y."/>
            <person name="Shao Z."/>
            <person name="Liang X."/>
            <person name="Xu J."/>
            <person name="Jin Q."/>
        </authorList>
    </citation>
    <scope>NUCLEOTIDE SEQUENCE [LARGE SCALE GENOMIC DNA]</scope>
    <source>
        <strain>053442</strain>
    </source>
</reference>
<keyword id="KW-0963">Cytoplasm</keyword>
<keyword id="KW-0342">GTP-binding</keyword>
<keyword id="KW-0378">Hydrolase</keyword>
<keyword id="KW-0479">Metal-binding</keyword>
<keyword id="KW-0547">Nucleotide-binding</keyword>
<keyword id="KW-0690">Ribosome biogenesis</keyword>
<keyword id="KW-0694">RNA-binding</keyword>
<keyword id="KW-0699">rRNA-binding</keyword>
<keyword id="KW-0862">Zinc</keyword>
<comment type="function">
    <text evidence="1">One of several proteins that assist in the late maturation steps of the functional core of the 30S ribosomal subunit. Helps release RbfA from mature subunits. May play a role in the assembly of ribosomal proteins into the subunit. Circularly permuted GTPase that catalyzes slow GTP hydrolysis, GTPase activity is stimulated by the 30S ribosomal subunit.</text>
</comment>
<comment type="cofactor">
    <cofactor evidence="1">
        <name>Zn(2+)</name>
        <dbReference type="ChEBI" id="CHEBI:29105"/>
    </cofactor>
    <text evidence="1">Binds 1 zinc ion per subunit.</text>
</comment>
<comment type="subunit">
    <text evidence="1">Monomer. Associates with 30S ribosomal subunit, binds 16S rRNA.</text>
</comment>
<comment type="subcellular location">
    <subcellularLocation>
        <location evidence="1">Cytoplasm</location>
    </subcellularLocation>
</comment>
<comment type="similarity">
    <text evidence="1">Belongs to the TRAFAC class YlqF/YawG GTPase family. RsgA subfamily.</text>
</comment>
<protein>
    <recommendedName>
        <fullName evidence="1">Small ribosomal subunit biogenesis GTPase RsgA</fullName>
        <ecNumber evidence="1">3.6.1.-</ecNumber>
    </recommendedName>
</protein>
<gene>
    <name evidence="1" type="primary">rsgA</name>
    <name type="ordered locus">NMCC_1883</name>
</gene>
<sequence>MPSEHPFSDGISTLNPKETMNDTAQITASYGRRYIVRTPDGTTYEASTRKKRVDFACGDRVRISPVNAEQVVIEDFLPRQSLLYRQDAWKTKLIAANVTQLLIVTAAVPSPSVRLLQRALLAAEAAGIRAVIVLNKADLPETALWREKLKFYETLGYPVIETRALENAGSLRPALQGHSNILLGQSGMGKSTLTNALLGSQTARTGDISAALDSGKHTTTHARLYDLNGETQLIDSPGLQEFGLHHLQAADLPRYFPDFRHLVGQCRFHNCTHRAEPGCAFKAAAETRAASPERLAFLQGITDELPG</sequence>
<organism>
    <name type="scientific">Neisseria meningitidis serogroup C (strain 053442)</name>
    <dbReference type="NCBI Taxonomy" id="374833"/>
    <lineage>
        <taxon>Bacteria</taxon>
        <taxon>Pseudomonadati</taxon>
        <taxon>Pseudomonadota</taxon>
        <taxon>Betaproteobacteria</taxon>
        <taxon>Neisseriales</taxon>
        <taxon>Neisseriaceae</taxon>
        <taxon>Neisseria</taxon>
    </lineage>
</organism>
<proteinExistence type="inferred from homology"/>